<proteinExistence type="inferred from homology"/>
<reference key="1">
    <citation type="journal article" date="2006" name="J. Bacteriol.">
        <title>Chromosome rearrangement and diversification of Francisella tularensis revealed by the type B (OSU18) genome sequence.</title>
        <authorList>
            <person name="Petrosino J.F."/>
            <person name="Xiang Q."/>
            <person name="Karpathy S.E."/>
            <person name="Jiang H."/>
            <person name="Yerrapragada S."/>
            <person name="Liu Y."/>
            <person name="Gioia J."/>
            <person name="Hemphill L."/>
            <person name="Gonzalez A."/>
            <person name="Raghavan T.M."/>
            <person name="Uzman A."/>
            <person name="Fox G.E."/>
            <person name="Highlander S."/>
            <person name="Reichard M."/>
            <person name="Morton R.J."/>
            <person name="Clinkenbeard K.D."/>
            <person name="Weinstock G.M."/>
        </authorList>
    </citation>
    <scope>NUCLEOTIDE SEQUENCE [LARGE SCALE GENOMIC DNA]</scope>
    <source>
        <strain>OSU18</strain>
    </source>
</reference>
<comment type="function">
    <text evidence="1">Major role in the synthesis of nucleoside triphosphates other than ATP. The ATP gamma phosphate is transferred to the NDP beta phosphate via a ping-pong mechanism, using a phosphorylated active-site intermediate.</text>
</comment>
<comment type="catalytic activity">
    <reaction evidence="1">
        <text>a 2'-deoxyribonucleoside 5'-diphosphate + ATP = a 2'-deoxyribonucleoside 5'-triphosphate + ADP</text>
        <dbReference type="Rhea" id="RHEA:44640"/>
        <dbReference type="ChEBI" id="CHEBI:30616"/>
        <dbReference type="ChEBI" id="CHEBI:61560"/>
        <dbReference type="ChEBI" id="CHEBI:73316"/>
        <dbReference type="ChEBI" id="CHEBI:456216"/>
        <dbReference type="EC" id="2.7.4.6"/>
    </reaction>
</comment>
<comment type="catalytic activity">
    <reaction evidence="1">
        <text>a ribonucleoside 5'-diphosphate + ATP = a ribonucleoside 5'-triphosphate + ADP</text>
        <dbReference type="Rhea" id="RHEA:18113"/>
        <dbReference type="ChEBI" id="CHEBI:30616"/>
        <dbReference type="ChEBI" id="CHEBI:57930"/>
        <dbReference type="ChEBI" id="CHEBI:61557"/>
        <dbReference type="ChEBI" id="CHEBI:456216"/>
        <dbReference type="EC" id="2.7.4.6"/>
    </reaction>
</comment>
<comment type="cofactor">
    <cofactor evidence="1">
        <name>Mg(2+)</name>
        <dbReference type="ChEBI" id="CHEBI:18420"/>
    </cofactor>
</comment>
<comment type="subunit">
    <text evidence="1">Homotetramer.</text>
</comment>
<comment type="subcellular location">
    <subcellularLocation>
        <location evidence="1">Cytoplasm</location>
    </subcellularLocation>
</comment>
<comment type="similarity">
    <text evidence="1">Belongs to the NDK family.</text>
</comment>
<keyword id="KW-0067">ATP-binding</keyword>
<keyword id="KW-0963">Cytoplasm</keyword>
<keyword id="KW-0418">Kinase</keyword>
<keyword id="KW-0460">Magnesium</keyword>
<keyword id="KW-0479">Metal-binding</keyword>
<keyword id="KW-0546">Nucleotide metabolism</keyword>
<keyword id="KW-0547">Nucleotide-binding</keyword>
<keyword id="KW-0597">Phosphoprotein</keyword>
<keyword id="KW-0808">Transferase</keyword>
<dbReference type="EC" id="2.7.4.6" evidence="1"/>
<dbReference type="EMBL" id="CP000437">
    <property type="protein sequence ID" value="ABI83130.1"/>
    <property type="molecule type" value="Genomic_DNA"/>
</dbReference>
<dbReference type="RefSeq" id="WP_003016495.1">
    <property type="nucleotide sequence ID" value="NC_017463.1"/>
</dbReference>
<dbReference type="SMR" id="Q0BLA4"/>
<dbReference type="GeneID" id="75264230"/>
<dbReference type="KEGG" id="fth:FTH_1282"/>
<dbReference type="GO" id="GO:0005737">
    <property type="term" value="C:cytoplasm"/>
    <property type="evidence" value="ECO:0007669"/>
    <property type="project" value="UniProtKB-SubCell"/>
</dbReference>
<dbReference type="GO" id="GO:0005524">
    <property type="term" value="F:ATP binding"/>
    <property type="evidence" value="ECO:0007669"/>
    <property type="project" value="UniProtKB-UniRule"/>
</dbReference>
<dbReference type="GO" id="GO:0046872">
    <property type="term" value="F:metal ion binding"/>
    <property type="evidence" value="ECO:0007669"/>
    <property type="project" value="UniProtKB-KW"/>
</dbReference>
<dbReference type="GO" id="GO:0004550">
    <property type="term" value="F:nucleoside diphosphate kinase activity"/>
    <property type="evidence" value="ECO:0007669"/>
    <property type="project" value="UniProtKB-UniRule"/>
</dbReference>
<dbReference type="GO" id="GO:0006241">
    <property type="term" value="P:CTP biosynthetic process"/>
    <property type="evidence" value="ECO:0007669"/>
    <property type="project" value="UniProtKB-UniRule"/>
</dbReference>
<dbReference type="GO" id="GO:0006183">
    <property type="term" value="P:GTP biosynthetic process"/>
    <property type="evidence" value="ECO:0007669"/>
    <property type="project" value="UniProtKB-UniRule"/>
</dbReference>
<dbReference type="GO" id="GO:0006228">
    <property type="term" value="P:UTP biosynthetic process"/>
    <property type="evidence" value="ECO:0007669"/>
    <property type="project" value="UniProtKB-UniRule"/>
</dbReference>
<dbReference type="CDD" id="cd04413">
    <property type="entry name" value="NDPk_I"/>
    <property type="match status" value="1"/>
</dbReference>
<dbReference type="FunFam" id="3.30.70.141:FF:000001">
    <property type="entry name" value="Nucleoside diphosphate kinase"/>
    <property type="match status" value="1"/>
</dbReference>
<dbReference type="Gene3D" id="3.30.70.141">
    <property type="entry name" value="Nucleoside diphosphate kinase-like domain"/>
    <property type="match status" value="1"/>
</dbReference>
<dbReference type="HAMAP" id="MF_00451">
    <property type="entry name" value="NDP_kinase"/>
    <property type="match status" value="1"/>
</dbReference>
<dbReference type="InterPro" id="IPR034907">
    <property type="entry name" value="NDK-like_dom"/>
</dbReference>
<dbReference type="InterPro" id="IPR036850">
    <property type="entry name" value="NDK-like_dom_sf"/>
</dbReference>
<dbReference type="InterPro" id="IPR001564">
    <property type="entry name" value="Nucleoside_diP_kinase"/>
</dbReference>
<dbReference type="InterPro" id="IPR023005">
    <property type="entry name" value="Nucleoside_diP_kinase_AS"/>
</dbReference>
<dbReference type="NCBIfam" id="NF001908">
    <property type="entry name" value="PRK00668.1"/>
    <property type="match status" value="1"/>
</dbReference>
<dbReference type="PANTHER" id="PTHR46161">
    <property type="entry name" value="NUCLEOSIDE DIPHOSPHATE KINASE"/>
    <property type="match status" value="1"/>
</dbReference>
<dbReference type="PANTHER" id="PTHR46161:SF3">
    <property type="entry name" value="NUCLEOSIDE DIPHOSPHATE KINASE DDB_G0292928-RELATED"/>
    <property type="match status" value="1"/>
</dbReference>
<dbReference type="Pfam" id="PF00334">
    <property type="entry name" value="NDK"/>
    <property type="match status" value="1"/>
</dbReference>
<dbReference type="PRINTS" id="PR01243">
    <property type="entry name" value="NUCDPKINASE"/>
</dbReference>
<dbReference type="SMART" id="SM00562">
    <property type="entry name" value="NDK"/>
    <property type="match status" value="1"/>
</dbReference>
<dbReference type="SUPFAM" id="SSF54919">
    <property type="entry name" value="Nucleoside diphosphate kinase, NDK"/>
    <property type="match status" value="1"/>
</dbReference>
<dbReference type="PROSITE" id="PS00469">
    <property type="entry name" value="NDPK"/>
    <property type="match status" value="1"/>
</dbReference>
<dbReference type="PROSITE" id="PS51374">
    <property type="entry name" value="NDPK_LIKE"/>
    <property type="match status" value="1"/>
</dbReference>
<gene>
    <name evidence="1" type="primary">ndk</name>
    <name type="ordered locus">FTH_1282</name>
</gene>
<feature type="chain" id="PRO_0000267779" description="Nucleoside diphosphate kinase">
    <location>
        <begin position="1"/>
        <end position="140"/>
    </location>
</feature>
<feature type="active site" description="Pros-phosphohistidine intermediate" evidence="1">
    <location>
        <position position="117"/>
    </location>
</feature>
<feature type="binding site" evidence="1">
    <location>
        <position position="11"/>
    </location>
    <ligand>
        <name>ATP</name>
        <dbReference type="ChEBI" id="CHEBI:30616"/>
    </ligand>
</feature>
<feature type="binding site" evidence="1">
    <location>
        <position position="59"/>
    </location>
    <ligand>
        <name>ATP</name>
        <dbReference type="ChEBI" id="CHEBI:30616"/>
    </ligand>
</feature>
<feature type="binding site" evidence="1">
    <location>
        <position position="87"/>
    </location>
    <ligand>
        <name>ATP</name>
        <dbReference type="ChEBI" id="CHEBI:30616"/>
    </ligand>
</feature>
<feature type="binding site" evidence="1">
    <location>
        <position position="93"/>
    </location>
    <ligand>
        <name>ATP</name>
        <dbReference type="ChEBI" id="CHEBI:30616"/>
    </ligand>
</feature>
<feature type="binding site" evidence="1">
    <location>
        <position position="104"/>
    </location>
    <ligand>
        <name>ATP</name>
        <dbReference type="ChEBI" id="CHEBI:30616"/>
    </ligand>
</feature>
<feature type="binding site" evidence="1">
    <location>
        <position position="114"/>
    </location>
    <ligand>
        <name>ATP</name>
        <dbReference type="ChEBI" id="CHEBI:30616"/>
    </ligand>
</feature>
<organism>
    <name type="scientific">Francisella tularensis subsp. holarctica (strain OSU18)</name>
    <dbReference type="NCBI Taxonomy" id="393011"/>
    <lineage>
        <taxon>Bacteria</taxon>
        <taxon>Pseudomonadati</taxon>
        <taxon>Pseudomonadota</taxon>
        <taxon>Gammaproteobacteria</taxon>
        <taxon>Thiotrichales</taxon>
        <taxon>Francisellaceae</taxon>
        <taxon>Francisella</taxon>
    </lineage>
</organism>
<accession>Q0BLA4</accession>
<sequence length="140" mass="15428">MTKQRTLSIIKPDAVEKNVIGEIYSRFEKAGLRIIAAKMKHLSKAEAEGFYAVHKDRPFFSALVEFMISGPVMIQVLEGENAIAKNRELMGATNPKEAKAGTIRADFADSIDANAVHGSDAEDTAAQEIRYFFSDTEIFG</sequence>
<name>NDK_FRATO</name>
<protein>
    <recommendedName>
        <fullName evidence="1">Nucleoside diphosphate kinase</fullName>
        <shortName evidence="1">NDK</shortName>
        <shortName evidence="1">NDP kinase</shortName>
        <ecNumber evidence="1">2.7.4.6</ecNumber>
    </recommendedName>
    <alternativeName>
        <fullName evidence="1">Nucleoside-2-P kinase</fullName>
    </alternativeName>
</protein>
<evidence type="ECO:0000255" key="1">
    <source>
        <dbReference type="HAMAP-Rule" id="MF_00451"/>
    </source>
</evidence>